<name>HMD_METVS</name>
<sequence>MKVAILGAGCYRTHAASGITNFSRAAQVAKEVGIPEITMTHSTITMGAELLHLIPEVTEVVVSDPCFAEEPGIVVLDQFDYGAVMEAHLAGDAEKVMPEIRAAVKAKAKETPKPPKGCIHFVHPEKVGLKVTSNDVEAVKDADIVITWLPKGGSQPAIIEKFASEIKKGAVVTHACTIPTPKFAKIFKDLGRDDLNIISFHPGAVPEMKGQAFLSEGLADAEKVEEFYCIAKAARGEAFKMPANLISPVCDMGSAVTAPVYAAILAYRDAVTQILGAPADFAQMMADEAISQMLDLMRKEGIKNMEEKLSPKALTGTADSMCFGPLAEILPASLKVLEKHAKENKCECGCSIKP</sequence>
<organism>
    <name type="scientific">Methanococcus vannielii (strain ATCC 35089 / DSM 1224 / JCM 13029 / OCM 148 / SB)</name>
    <dbReference type="NCBI Taxonomy" id="406327"/>
    <lineage>
        <taxon>Archaea</taxon>
        <taxon>Methanobacteriati</taxon>
        <taxon>Methanobacteriota</taxon>
        <taxon>Methanomada group</taxon>
        <taxon>Methanococci</taxon>
        <taxon>Methanococcales</taxon>
        <taxon>Methanococcaceae</taxon>
        <taxon>Methanococcus</taxon>
    </lineage>
</organism>
<comment type="function">
    <text evidence="1">Catalyzes the reversible reduction of methenyl-H(4)MPT(+) to methylene-H(4)MPT.</text>
</comment>
<comment type="catalytic activity">
    <reaction evidence="1">
        <text>5,10-methenyl-5,6,7,8-tetrahydromethanopterin + H2 = 5,10-methylenetetrahydromethanopterin + H(+)</text>
        <dbReference type="Rhea" id="RHEA:20017"/>
        <dbReference type="ChEBI" id="CHEBI:15378"/>
        <dbReference type="ChEBI" id="CHEBI:18276"/>
        <dbReference type="ChEBI" id="CHEBI:57818"/>
        <dbReference type="ChEBI" id="CHEBI:58337"/>
        <dbReference type="EC" id="1.12.98.2"/>
    </reaction>
</comment>
<comment type="pathway">
    <text evidence="1">One-carbon metabolism; methanogenesis from CO(2); 5,10-methylene-5,6,7,8-tetrahydromethanopterin from 5,10-methenyl-5,6,7,8-tetrahydromethanopterin (hydrogen route): step 1/1.</text>
</comment>
<comment type="similarity">
    <text evidence="1">Belongs to the HMD family.</text>
</comment>
<gene>
    <name evidence="1" type="primary">hmd</name>
    <name type="ordered locus">Mevan_1132</name>
</gene>
<proteinExistence type="inferred from homology"/>
<dbReference type="EC" id="1.12.98.2" evidence="1"/>
<dbReference type="EMBL" id="CP000742">
    <property type="protein sequence ID" value="ABR55032.1"/>
    <property type="molecule type" value="Genomic_DNA"/>
</dbReference>
<dbReference type="RefSeq" id="WP_012065947.1">
    <property type="nucleotide sequence ID" value="NC_009634.1"/>
</dbReference>
<dbReference type="SMR" id="A6URB0"/>
<dbReference type="STRING" id="406327.Mevan_1132"/>
<dbReference type="GeneID" id="5325952"/>
<dbReference type="KEGG" id="mvn:Mevan_1132"/>
<dbReference type="eggNOG" id="arCOG03196">
    <property type="taxonomic scope" value="Archaea"/>
</dbReference>
<dbReference type="HOGENOM" id="CLU_772960_0_0_2"/>
<dbReference type="OrthoDB" id="113982at2157"/>
<dbReference type="UniPathway" id="UPA00640">
    <property type="reaction ID" value="UER00696"/>
</dbReference>
<dbReference type="Proteomes" id="UP000001107">
    <property type="component" value="Chromosome"/>
</dbReference>
<dbReference type="GO" id="GO:0047068">
    <property type="term" value="F:N5,N10-methenyltetrahydromethanopterin hydrogenase activity"/>
    <property type="evidence" value="ECO:0007669"/>
    <property type="project" value="UniProtKB-UniRule"/>
</dbReference>
<dbReference type="GO" id="GO:0004735">
    <property type="term" value="F:pyrroline-5-carboxylate reductase activity"/>
    <property type="evidence" value="ECO:0007669"/>
    <property type="project" value="TreeGrafter"/>
</dbReference>
<dbReference type="GO" id="GO:0055129">
    <property type="term" value="P:L-proline biosynthetic process"/>
    <property type="evidence" value="ECO:0007669"/>
    <property type="project" value="TreeGrafter"/>
</dbReference>
<dbReference type="GO" id="GO:0019386">
    <property type="term" value="P:methanogenesis, from carbon dioxide"/>
    <property type="evidence" value="ECO:0007669"/>
    <property type="project" value="UniProtKB-UniRule"/>
</dbReference>
<dbReference type="GO" id="GO:0006730">
    <property type="term" value="P:one-carbon metabolic process"/>
    <property type="evidence" value="ECO:0007669"/>
    <property type="project" value="UniProtKB-UniRule"/>
</dbReference>
<dbReference type="Gene3D" id="1.20.120.1300">
    <property type="entry name" value="Hmd, C-terminal helical subdomain"/>
    <property type="match status" value="1"/>
</dbReference>
<dbReference type="Gene3D" id="3.40.50.720">
    <property type="entry name" value="NAD(P)-binding Rossmann-like Domain"/>
    <property type="match status" value="1"/>
</dbReference>
<dbReference type="HAMAP" id="MF_01090">
    <property type="entry name" value="HMD"/>
    <property type="match status" value="1"/>
</dbReference>
<dbReference type="InterPro" id="IPR008927">
    <property type="entry name" value="6-PGluconate_DH-like_C_sf"/>
</dbReference>
<dbReference type="InterPro" id="IPR010062">
    <property type="entry name" value="HMD"/>
</dbReference>
<dbReference type="InterPro" id="IPR004889">
    <property type="entry name" value="HMD_C"/>
</dbReference>
<dbReference type="InterPro" id="IPR038182">
    <property type="entry name" value="HMD_C_sf"/>
</dbReference>
<dbReference type="InterPro" id="IPR055205">
    <property type="entry name" value="HMD_N"/>
</dbReference>
<dbReference type="InterPro" id="IPR024190">
    <property type="entry name" value="METHMP_Hmd"/>
</dbReference>
<dbReference type="InterPro" id="IPR036291">
    <property type="entry name" value="NAD(P)-bd_dom_sf"/>
</dbReference>
<dbReference type="NCBIfam" id="TIGR01723">
    <property type="entry name" value="hmd_TIGR"/>
    <property type="match status" value="1"/>
</dbReference>
<dbReference type="PANTHER" id="PTHR11645">
    <property type="entry name" value="PYRROLINE-5-CARBOXYLATE REDUCTASE"/>
    <property type="match status" value="1"/>
</dbReference>
<dbReference type="PANTHER" id="PTHR11645:SF0">
    <property type="entry name" value="PYRROLINE-5-CARBOXYLATE REDUCTASE 3"/>
    <property type="match status" value="1"/>
</dbReference>
<dbReference type="Pfam" id="PF03201">
    <property type="entry name" value="HMD"/>
    <property type="match status" value="1"/>
</dbReference>
<dbReference type="Pfam" id="PF22616">
    <property type="entry name" value="HMD_N"/>
    <property type="match status" value="1"/>
</dbReference>
<dbReference type="PIRSF" id="PIRSF016158">
    <property type="entry name" value="HMD"/>
    <property type="match status" value="1"/>
</dbReference>
<dbReference type="PIRSF" id="PIRSF500165">
    <property type="entry name" value="HMDI"/>
    <property type="match status" value="1"/>
</dbReference>
<dbReference type="SUPFAM" id="SSF48179">
    <property type="entry name" value="6-phosphogluconate dehydrogenase C-terminal domain-like"/>
    <property type="match status" value="1"/>
</dbReference>
<dbReference type="SUPFAM" id="SSF51735">
    <property type="entry name" value="NAD(P)-binding Rossmann-fold domains"/>
    <property type="match status" value="1"/>
</dbReference>
<keyword id="KW-0484">Methanogenesis</keyword>
<keyword id="KW-0554">One-carbon metabolism</keyword>
<keyword id="KW-0560">Oxidoreductase</keyword>
<feature type="chain" id="PRO_1000149887" description="5,10-methenyltetrahydromethanopterin hydrogenase">
    <location>
        <begin position="1"/>
        <end position="354"/>
    </location>
</feature>
<accession>A6URB0</accession>
<reference key="1">
    <citation type="submission" date="2007-06" db="EMBL/GenBank/DDBJ databases">
        <title>Complete sequence of Methanococcus vannielii SB.</title>
        <authorList>
            <consortium name="US DOE Joint Genome Institute"/>
            <person name="Copeland A."/>
            <person name="Lucas S."/>
            <person name="Lapidus A."/>
            <person name="Barry K."/>
            <person name="Glavina del Rio T."/>
            <person name="Dalin E."/>
            <person name="Tice H."/>
            <person name="Pitluck S."/>
            <person name="Chain P."/>
            <person name="Malfatti S."/>
            <person name="Shin M."/>
            <person name="Vergez L."/>
            <person name="Schmutz J."/>
            <person name="Larimer F."/>
            <person name="Land M."/>
            <person name="Hauser L."/>
            <person name="Kyrpides N."/>
            <person name="Anderson I."/>
            <person name="Sieprawska-Lupa M."/>
            <person name="Whitman W.B."/>
            <person name="Richardson P."/>
        </authorList>
    </citation>
    <scope>NUCLEOTIDE SEQUENCE [LARGE SCALE GENOMIC DNA]</scope>
    <source>
        <strain>ATCC 35089 / DSM 1224 / JCM 13029 / OCM 148 / SB</strain>
    </source>
</reference>
<protein>
    <recommendedName>
        <fullName evidence="1">5,10-methenyltetrahydromethanopterin hydrogenase</fullName>
        <ecNumber evidence="1">1.12.98.2</ecNumber>
    </recommendedName>
    <alternativeName>
        <fullName evidence="1">H(2)-dependent methylene-H(4)MPT dehydrogenase</fullName>
    </alternativeName>
    <alternativeName>
        <fullName evidence="1">H(2)-forming N(5),N(10)-methylenetetrahydromethanopterin dehydrogenase</fullName>
    </alternativeName>
    <alternativeName>
        <fullName evidence="1">N(5),N(10)-methenyltetrahydromethanopterin hydrogenase</fullName>
    </alternativeName>
</protein>
<evidence type="ECO:0000255" key="1">
    <source>
        <dbReference type="HAMAP-Rule" id="MF_01090"/>
    </source>
</evidence>